<name>DUT_MYCMM</name>
<sequence>MSNSLAVVRLDPGLPLPSRAHDGDAGVDLYSAEDVVLPPGQRALVRTGVAVAIPFGMVGLVHPRSGLASRVGLSIVNSPGTIDAGYRGELKVALINLDPATPIVVNRGDRIAQLLVQRVELLELVEVSSFDEAGLAATSRGDGGHGSSGGHASL</sequence>
<dbReference type="EC" id="3.6.1.23" evidence="2"/>
<dbReference type="EMBL" id="CP000854">
    <property type="protein sequence ID" value="ACC40467.1"/>
    <property type="molecule type" value="Genomic_DNA"/>
</dbReference>
<dbReference type="RefSeq" id="WP_012393798.1">
    <property type="nucleotide sequence ID" value="NC_010612.1"/>
</dbReference>
<dbReference type="SMR" id="B2HM03"/>
<dbReference type="STRING" id="216594.MMAR_2017"/>
<dbReference type="GeneID" id="34343979"/>
<dbReference type="GeneID" id="93437745"/>
<dbReference type="KEGG" id="mmi:MMAR_2017"/>
<dbReference type="eggNOG" id="COG0756">
    <property type="taxonomic scope" value="Bacteria"/>
</dbReference>
<dbReference type="HOGENOM" id="CLU_068508_1_3_11"/>
<dbReference type="OrthoDB" id="9809956at2"/>
<dbReference type="UniPathway" id="UPA00610">
    <property type="reaction ID" value="UER00666"/>
</dbReference>
<dbReference type="Proteomes" id="UP000001190">
    <property type="component" value="Chromosome"/>
</dbReference>
<dbReference type="GO" id="GO:0004170">
    <property type="term" value="F:dUTP diphosphatase activity"/>
    <property type="evidence" value="ECO:0007669"/>
    <property type="project" value="UniProtKB-UniRule"/>
</dbReference>
<dbReference type="GO" id="GO:0000287">
    <property type="term" value="F:magnesium ion binding"/>
    <property type="evidence" value="ECO:0007669"/>
    <property type="project" value="UniProtKB-UniRule"/>
</dbReference>
<dbReference type="GO" id="GO:0006226">
    <property type="term" value="P:dUMP biosynthetic process"/>
    <property type="evidence" value="ECO:0007669"/>
    <property type="project" value="UniProtKB-UniRule"/>
</dbReference>
<dbReference type="GO" id="GO:0046081">
    <property type="term" value="P:dUTP catabolic process"/>
    <property type="evidence" value="ECO:0007669"/>
    <property type="project" value="InterPro"/>
</dbReference>
<dbReference type="CDD" id="cd07557">
    <property type="entry name" value="trimeric_dUTPase"/>
    <property type="match status" value="1"/>
</dbReference>
<dbReference type="FunFam" id="2.70.40.10:FF:000008">
    <property type="entry name" value="Deoxyuridine 5'-triphosphate nucleotidohydrolase"/>
    <property type="match status" value="1"/>
</dbReference>
<dbReference type="Gene3D" id="2.70.40.10">
    <property type="match status" value="1"/>
</dbReference>
<dbReference type="HAMAP" id="MF_00116">
    <property type="entry name" value="dUTPase_bact"/>
    <property type="match status" value="1"/>
</dbReference>
<dbReference type="InterPro" id="IPR008181">
    <property type="entry name" value="dUTPase"/>
</dbReference>
<dbReference type="InterPro" id="IPR029054">
    <property type="entry name" value="dUTPase-like"/>
</dbReference>
<dbReference type="InterPro" id="IPR036157">
    <property type="entry name" value="dUTPase-like_sf"/>
</dbReference>
<dbReference type="InterPro" id="IPR033704">
    <property type="entry name" value="dUTPase_trimeric"/>
</dbReference>
<dbReference type="NCBIfam" id="TIGR00576">
    <property type="entry name" value="dut"/>
    <property type="match status" value="1"/>
</dbReference>
<dbReference type="NCBIfam" id="NF001862">
    <property type="entry name" value="PRK00601.1"/>
    <property type="match status" value="1"/>
</dbReference>
<dbReference type="PANTHER" id="PTHR11241">
    <property type="entry name" value="DEOXYURIDINE 5'-TRIPHOSPHATE NUCLEOTIDOHYDROLASE"/>
    <property type="match status" value="1"/>
</dbReference>
<dbReference type="PANTHER" id="PTHR11241:SF0">
    <property type="entry name" value="DEOXYURIDINE 5'-TRIPHOSPHATE NUCLEOTIDOHYDROLASE"/>
    <property type="match status" value="1"/>
</dbReference>
<dbReference type="Pfam" id="PF00692">
    <property type="entry name" value="dUTPase"/>
    <property type="match status" value="1"/>
</dbReference>
<dbReference type="SUPFAM" id="SSF51283">
    <property type="entry name" value="dUTPase-like"/>
    <property type="match status" value="1"/>
</dbReference>
<proteinExistence type="inferred from homology"/>
<reference key="1">
    <citation type="journal article" date="2008" name="Genome Res.">
        <title>Insights from the complete genome sequence of Mycobacterium marinum on the evolution of Mycobacterium tuberculosis.</title>
        <authorList>
            <person name="Stinear T.P."/>
            <person name="Seemann T."/>
            <person name="Harrison P.F."/>
            <person name="Jenkin G.A."/>
            <person name="Davies J.K."/>
            <person name="Johnson P.D."/>
            <person name="Abdellah Z."/>
            <person name="Arrowsmith C."/>
            <person name="Chillingworth T."/>
            <person name="Churcher C."/>
            <person name="Clarke K."/>
            <person name="Cronin A."/>
            <person name="Davis P."/>
            <person name="Goodhead I."/>
            <person name="Holroyd N."/>
            <person name="Jagels K."/>
            <person name="Lord A."/>
            <person name="Moule S."/>
            <person name="Mungall K."/>
            <person name="Norbertczak H."/>
            <person name="Quail M.A."/>
            <person name="Rabbinowitsch E."/>
            <person name="Walker D."/>
            <person name="White B."/>
            <person name="Whitehead S."/>
            <person name="Small P.L."/>
            <person name="Brosch R."/>
            <person name="Ramakrishnan L."/>
            <person name="Fischbach M.A."/>
            <person name="Parkhill J."/>
            <person name="Cole S.T."/>
        </authorList>
    </citation>
    <scope>NUCLEOTIDE SEQUENCE [LARGE SCALE GENOMIC DNA]</scope>
    <source>
        <strain>ATCC BAA-535 / M</strain>
    </source>
</reference>
<protein>
    <recommendedName>
        <fullName evidence="2">Deoxyuridine 5'-triphosphate nucleotidohydrolase</fullName>
        <shortName evidence="2">dUTPase</shortName>
        <ecNumber evidence="2">3.6.1.23</ecNumber>
    </recommendedName>
    <alternativeName>
        <fullName evidence="2">dUTP pyrophosphatase</fullName>
    </alternativeName>
</protein>
<evidence type="ECO:0000250" key="1"/>
<evidence type="ECO:0000255" key="2">
    <source>
        <dbReference type="HAMAP-Rule" id="MF_00116"/>
    </source>
</evidence>
<feature type="chain" id="PRO_1000094971" description="Deoxyuridine 5'-triphosphate nucleotidohydrolase">
    <location>
        <begin position="1"/>
        <end position="154"/>
    </location>
</feature>
<feature type="binding site" evidence="2">
    <location>
        <begin position="64"/>
        <end position="66"/>
    </location>
    <ligand>
        <name>substrate</name>
    </ligand>
</feature>
<feature type="binding site" evidence="2">
    <location>
        <position position="77"/>
    </location>
    <ligand>
        <name>substrate</name>
    </ligand>
</feature>
<feature type="binding site" evidence="2">
    <location>
        <begin position="81"/>
        <end position="83"/>
    </location>
    <ligand>
        <name>substrate</name>
    </ligand>
</feature>
<feature type="binding site" evidence="2">
    <location>
        <position position="91"/>
    </location>
    <ligand>
        <name>substrate</name>
    </ligand>
</feature>
<accession>B2HM03</accession>
<organism>
    <name type="scientific">Mycobacterium marinum (strain ATCC BAA-535 / M)</name>
    <dbReference type="NCBI Taxonomy" id="216594"/>
    <lineage>
        <taxon>Bacteria</taxon>
        <taxon>Bacillati</taxon>
        <taxon>Actinomycetota</taxon>
        <taxon>Actinomycetes</taxon>
        <taxon>Mycobacteriales</taxon>
        <taxon>Mycobacteriaceae</taxon>
        <taxon>Mycobacterium</taxon>
        <taxon>Mycobacterium ulcerans group</taxon>
    </lineage>
</organism>
<comment type="function">
    <text evidence="2">This enzyme is involved in nucleotide metabolism: it produces dUMP, the immediate precursor of thymidine nucleotides and it decreases the intracellular concentration of dUTP so that uracil cannot be incorporated into DNA.</text>
</comment>
<comment type="catalytic activity">
    <reaction evidence="2">
        <text>dUTP + H2O = dUMP + diphosphate + H(+)</text>
        <dbReference type="Rhea" id="RHEA:10248"/>
        <dbReference type="ChEBI" id="CHEBI:15377"/>
        <dbReference type="ChEBI" id="CHEBI:15378"/>
        <dbReference type="ChEBI" id="CHEBI:33019"/>
        <dbReference type="ChEBI" id="CHEBI:61555"/>
        <dbReference type="ChEBI" id="CHEBI:246422"/>
        <dbReference type="EC" id="3.6.1.23"/>
    </reaction>
</comment>
<comment type="cofactor">
    <cofactor evidence="2">
        <name>Mg(2+)</name>
        <dbReference type="ChEBI" id="CHEBI:18420"/>
    </cofactor>
</comment>
<comment type="pathway">
    <text evidence="2">Pyrimidine metabolism; dUMP biosynthesis; dUMP from dCTP (dUTP route): step 2/2.</text>
</comment>
<comment type="subunit">
    <text evidence="2">Homotrimer.</text>
</comment>
<comment type="miscellaneous">
    <text evidence="1">Each trimer binds three substrate molecules. The ligands are bound between subunits, and for each substrate molecule, residues from adjacent subunits contribute to the binding interactions (By similarity).</text>
</comment>
<comment type="similarity">
    <text evidence="2">Belongs to the dUTPase family.</text>
</comment>
<gene>
    <name evidence="2" type="primary">dut</name>
    <name type="ordered locus">MMAR_2017</name>
</gene>
<keyword id="KW-0378">Hydrolase</keyword>
<keyword id="KW-0460">Magnesium</keyword>
<keyword id="KW-0479">Metal-binding</keyword>
<keyword id="KW-0546">Nucleotide metabolism</keyword>
<keyword id="KW-1185">Reference proteome</keyword>